<keyword id="KW-0997">Cell inner membrane</keyword>
<keyword id="KW-1003">Cell membrane</keyword>
<keyword id="KW-0406">Ion transport</keyword>
<keyword id="KW-0472">Membrane</keyword>
<keyword id="KW-0520">NAD</keyword>
<keyword id="KW-1185">Reference proteome</keyword>
<keyword id="KW-0915">Sodium</keyword>
<keyword id="KW-0739">Sodium transport</keyword>
<keyword id="KW-1278">Translocase</keyword>
<keyword id="KW-0812">Transmembrane</keyword>
<keyword id="KW-1133">Transmembrane helix</keyword>
<keyword id="KW-0813">Transport</keyword>
<keyword id="KW-0830">Ubiquinone</keyword>
<evidence type="ECO:0000255" key="1">
    <source>
        <dbReference type="HAMAP-Rule" id="MF_00428"/>
    </source>
</evidence>
<proteinExistence type="inferred from homology"/>
<protein>
    <recommendedName>
        <fullName evidence="1">Na(+)-translocating NADH-quinone reductase subunit D</fullName>
        <shortName evidence="1">Na(+)-NQR subunit D</shortName>
        <shortName evidence="1">Na(+)-translocating NQR subunit D</shortName>
        <ecNumber evidence="1">7.2.1.1</ecNumber>
    </recommendedName>
    <alternativeName>
        <fullName evidence="1">NQR complex subunit D</fullName>
    </alternativeName>
    <alternativeName>
        <fullName evidence="1">NQR-1 subunit D</fullName>
    </alternativeName>
</protein>
<dbReference type="EC" id="7.2.1.1" evidence="1"/>
<dbReference type="EMBL" id="CR378665">
    <property type="protein sequence ID" value="CAG19239.1"/>
    <property type="molecule type" value="Genomic_DNA"/>
</dbReference>
<dbReference type="RefSeq" id="WP_011217577.1">
    <property type="nucleotide sequence ID" value="NC_006370.1"/>
</dbReference>
<dbReference type="SMR" id="Q6LTY6"/>
<dbReference type="STRING" id="298386.PBPRA0826"/>
<dbReference type="KEGG" id="ppr:PBPRA0826"/>
<dbReference type="eggNOG" id="COG1347">
    <property type="taxonomic scope" value="Bacteria"/>
</dbReference>
<dbReference type="HOGENOM" id="CLU_046659_1_1_6"/>
<dbReference type="Proteomes" id="UP000000593">
    <property type="component" value="Chromosome 1"/>
</dbReference>
<dbReference type="GO" id="GO:0005886">
    <property type="term" value="C:plasma membrane"/>
    <property type="evidence" value="ECO:0007669"/>
    <property type="project" value="UniProtKB-SubCell"/>
</dbReference>
<dbReference type="GO" id="GO:0016655">
    <property type="term" value="F:oxidoreductase activity, acting on NAD(P)H, quinone or similar compound as acceptor"/>
    <property type="evidence" value="ECO:0007669"/>
    <property type="project" value="UniProtKB-UniRule"/>
</dbReference>
<dbReference type="GO" id="GO:0006814">
    <property type="term" value="P:sodium ion transport"/>
    <property type="evidence" value="ECO:0007669"/>
    <property type="project" value="UniProtKB-UniRule"/>
</dbReference>
<dbReference type="HAMAP" id="MF_00428">
    <property type="entry name" value="NqrD"/>
    <property type="match status" value="1"/>
</dbReference>
<dbReference type="InterPro" id="IPR011292">
    <property type="entry name" value="NqrD"/>
</dbReference>
<dbReference type="InterPro" id="IPR003667">
    <property type="entry name" value="NqrDE/RnfAE"/>
</dbReference>
<dbReference type="NCBIfam" id="TIGR01939">
    <property type="entry name" value="nqrD"/>
    <property type="match status" value="1"/>
</dbReference>
<dbReference type="NCBIfam" id="NF006777">
    <property type="entry name" value="PRK09292.1"/>
    <property type="match status" value="1"/>
</dbReference>
<dbReference type="NCBIfam" id="NF009070">
    <property type="entry name" value="PRK12405.1"/>
    <property type="match status" value="1"/>
</dbReference>
<dbReference type="PANTHER" id="PTHR30586">
    <property type="entry name" value="ELECTRON TRANSPORT COMPLEX PROTEIN RNFE"/>
    <property type="match status" value="1"/>
</dbReference>
<dbReference type="PANTHER" id="PTHR30586:SF1">
    <property type="entry name" value="NA(+)-TRANSLOCATING NADH-QUINONE REDUCTASE SUBUNIT D"/>
    <property type="match status" value="1"/>
</dbReference>
<dbReference type="Pfam" id="PF02508">
    <property type="entry name" value="Rnf-Nqr"/>
    <property type="match status" value="1"/>
</dbReference>
<dbReference type="PIRSF" id="PIRSF006102">
    <property type="entry name" value="NQR_DE"/>
    <property type="match status" value="1"/>
</dbReference>
<organism>
    <name type="scientific">Photobacterium profundum (strain SS9)</name>
    <dbReference type="NCBI Taxonomy" id="298386"/>
    <lineage>
        <taxon>Bacteria</taxon>
        <taxon>Pseudomonadati</taxon>
        <taxon>Pseudomonadota</taxon>
        <taxon>Gammaproteobacteria</taxon>
        <taxon>Vibrionales</taxon>
        <taxon>Vibrionaceae</taxon>
        <taxon>Photobacterium</taxon>
    </lineage>
</organism>
<comment type="function">
    <text evidence="1">NQR complex catalyzes the reduction of ubiquinone-1 to ubiquinol by two successive reactions, coupled with the transport of Na(+) ions from the cytoplasm to the periplasm. NqrA to NqrE are probably involved in the second step, the conversion of ubisemiquinone to ubiquinol.</text>
</comment>
<comment type="catalytic activity">
    <reaction evidence="1">
        <text>a ubiquinone + n Na(+)(in) + NADH + H(+) = a ubiquinol + n Na(+)(out) + NAD(+)</text>
        <dbReference type="Rhea" id="RHEA:47748"/>
        <dbReference type="Rhea" id="RHEA-COMP:9565"/>
        <dbReference type="Rhea" id="RHEA-COMP:9566"/>
        <dbReference type="ChEBI" id="CHEBI:15378"/>
        <dbReference type="ChEBI" id="CHEBI:16389"/>
        <dbReference type="ChEBI" id="CHEBI:17976"/>
        <dbReference type="ChEBI" id="CHEBI:29101"/>
        <dbReference type="ChEBI" id="CHEBI:57540"/>
        <dbReference type="ChEBI" id="CHEBI:57945"/>
        <dbReference type="EC" id="7.2.1.1"/>
    </reaction>
</comment>
<comment type="subunit">
    <text evidence="1">Composed of six subunits; NqrA, NqrB, NqrC, NqrD, NqrE and NqrF.</text>
</comment>
<comment type="subcellular location">
    <subcellularLocation>
        <location evidence="1">Cell inner membrane</location>
        <topology evidence="1">Multi-pass membrane protein</topology>
    </subcellularLocation>
</comment>
<comment type="similarity">
    <text evidence="1">Belongs to the NqrDE/RnfAE family.</text>
</comment>
<feature type="chain" id="PRO_1000060158" description="Na(+)-translocating NADH-quinone reductase subunit D">
    <location>
        <begin position="1"/>
        <end position="210"/>
    </location>
</feature>
<feature type="transmembrane region" description="Helical" evidence="1">
    <location>
        <begin position="10"/>
        <end position="30"/>
    </location>
</feature>
<feature type="transmembrane region" description="Helical" evidence="1">
    <location>
        <begin position="42"/>
        <end position="62"/>
    </location>
</feature>
<feature type="transmembrane region" description="Helical" evidence="1">
    <location>
        <begin position="72"/>
        <end position="92"/>
    </location>
</feature>
<feature type="transmembrane region" description="Helical" evidence="1">
    <location>
        <begin position="103"/>
        <end position="123"/>
    </location>
</feature>
<feature type="transmembrane region" description="Helical" evidence="1">
    <location>
        <begin position="131"/>
        <end position="151"/>
    </location>
</feature>
<feature type="transmembrane region" description="Helical" evidence="1">
    <location>
        <begin position="178"/>
        <end position="198"/>
    </location>
</feature>
<name>NQRD_PHOPR</name>
<gene>
    <name evidence="1" type="primary">nqrD</name>
    <name type="ordered locus">PBPRA0826</name>
</gene>
<sequence length="210" mass="22836">MADTKEMKKILFAPFLDNNPIALQVLGVCSALAVTTKLETAFVMTLAVMFVTAFSNLFVSLIRNHIPNSVRIIVQMAIIASLVIVVDQVLKAFVYDISKQLSVFVGLIITNCIVMGRAEAYAMKSAPLPSFIDGVGNGLGYGFVLITVAFFRELLGSGKLFGVEVLPLVSDGGWYQPNGLMLLAPSAFFLIGFMIWAIRIIRPAQVEAKE</sequence>
<accession>Q6LTY6</accession>
<reference key="1">
    <citation type="journal article" date="2005" name="Science">
        <title>Life at depth: Photobacterium profundum genome sequence and expression analysis.</title>
        <authorList>
            <person name="Vezzi A."/>
            <person name="Campanaro S."/>
            <person name="D'Angelo M."/>
            <person name="Simonato F."/>
            <person name="Vitulo N."/>
            <person name="Lauro F.M."/>
            <person name="Cestaro A."/>
            <person name="Malacrida G."/>
            <person name="Simionati B."/>
            <person name="Cannata N."/>
            <person name="Romualdi C."/>
            <person name="Bartlett D.H."/>
            <person name="Valle G."/>
        </authorList>
    </citation>
    <scope>NUCLEOTIDE SEQUENCE [LARGE SCALE GENOMIC DNA]</scope>
    <source>
        <strain>ATCC BAA-1253 / SS9</strain>
    </source>
</reference>